<sequence length="493" mass="56828">MMSEPKRLHPVAVILNLCHTIIQTIKNIILPFFFVYIVNSNHTVRFYGAIALGVLFIWLVAASIIKWRRFTYRIEDDEFRIEEGLFVTKKRYISIDRIQTMNTSAGLVQQIFKLVKLQIETAGGGKEAEAVLSAISVEEAERIKEAVFKKKAQRRENELDEERLEAEEELDPSVEVQEHYRMNAKELLMAASTSGGIGVIISAVFALISQLDEVLPMDWLFDKFSFLQHASIGIYAVLIFIGLFIAWIFSIAGMMFRYANFQIIKKEQELVISRGIIEKHQVTIPLRKIQAIKIKENIIRQLFGFVTVSIVSAGGGDREKEEGALTILFPMIHKKKLPHMLRTFTPEYTLEENCRRLPRRALKRYLFRSVIFSLFLIIPLCIFFQPWGYLSVILLPIELLFGYLAYKEAAWTINGDRLQLTSRFIGRTTAIVLKKRMQVCKFSQSYFQKKGRLYTISTSVKSSSHMEELTVRDVGEEDAAFILKWYSYEKADG</sequence>
<accession>P96616</accession>
<accession>Q797K8</accession>
<gene>
    <name type="primary">ydbT</name>
    <name type="ordered locus">BSU04600</name>
</gene>
<evidence type="ECO:0000255" key="1"/>
<evidence type="ECO:0000305" key="2"/>
<dbReference type="EMBL" id="AB001488">
    <property type="protein sequence ID" value="BAA19297.1"/>
    <property type="molecule type" value="Genomic_DNA"/>
</dbReference>
<dbReference type="EMBL" id="AL009126">
    <property type="protein sequence ID" value="CAB12267.1"/>
    <property type="molecule type" value="Genomic_DNA"/>
</dbReference>
<dbReference type="PIR" id="F69772">
    <property type="entry name" value="F69772"/>
</dbReference>
<dbReference type="RefSeq" id="NP_388341.1">
    <property type="nucleotide sequence ID" value="NC_000964.3"/>
</dbReference>
<dbReference type="RefSeq" id="WP_009966602.1">
    <property type="nucleotide sequence ID" value="NZ_OZ025638.1"/>
</dbReference>
<dbReference type="FunCoup" id="P96616">
    <property type="interactions" value="6"/>
</dbReference>
<dbReference type="STRING" id="224308.BSU04600"/>
<dbReference type="PaxDb" id="224308-BSU04600"/>
<dbReference type="DNASU" id="938221"/>
<dbReference type="EnsemblBacteria" id="CAB12267">
    <property type="protein sequence ID" value="CAB12267"/>
    <property type="gene ID" value="BSU_04600"/>
</dbReference>
<dbReference type="GeneID" id="938221"/>
<dbReference type="KEGG" id="bsu:BSU04600"/>
<dbReference type="PATRIC" id="fig|224308.179.peg.488"/>
<dbReference type="eggNOG" id="COG3428">
    <property type="taxonomic scope" value="Bacteria"/>
</dbReference>
<dbReference type="InParanoid" id="P96616"/>
<dbReference type="OrthoDB" id="2195155at2"/>
<dbReference type="PhylomeDB" id="P96616"/>
<dbReference type="BioCyc" id="BSUB:BSU04600-MONOMER"/>
<dbReference type="Proteomes" id="UP000001570">
    <property type="component" value="Chromosome"/>
</dbReference>
<dbReference type="GO" id="GO:0005886">
    <property type="term" value="C:plasma membrane"/>
    <property type="evidence" value="ECO:0007669"/>
    <property type="project" value="UniProtKB-SubCell"/>
</dbReference>
<dbReference type="InterPro" id="IPR014529">
    <property type="entry name" value="UCP026631"/>
</dbReference>
<dbReference type="InterPro" id="IPR005182">
    <property type="entry name" value="YdbS-like_PH"/>
</dbReference>
<dbReference type="PANTHER" id="PTHR34473">
    <property type="entry name" value="UPF0699 TRANSMEMBRANE PROTEIN YDBS"/>
    <property type="match status" value="1"/>
</dbReference>
<dbReference type="PANTHER" id="PTHR34473:SF2">
    <property type="entry name" value="UPF0699 TRANSMEMBRANE PROTEIN YDBT"/>
    <property type="match status" value="1"/>
</dbReference>
<dbReference type="Pfam" id="PF03703">
    <property type="entry name" value="bPH_2"/>
    <property type="match status" value="3"/>
</dbReference>
<dbReference type="PIRSF" id="PIRSF026631">
    <property type="entry name" value="UCP026631"/>
    <property type="match status" value="1"/>
</dbReference>
<keyword id="KW-1003">Cell membrane</keyword>
<keyword id="KW-0472">Membrane</keyword>
<keyword id="KW-1185">Reference proteome</keyword>
<keyword id="KW-0812">Transmembrane</keyword>
<keyword id="KW-1133">Transmembrane helix</keyword>
<reference key="1">
    <citation type="submission" date="1997-03" db="EMBL/GenBank/DDBJ databases">
        <title>A 148 kbp sequence of the region between 35 and 47 degree of the Bacillus subtilis genome.</title>
        <authorList>
            <person name="Kasahara Y."/>
            <person name="Nakai S."/>
            <person name="Lee S."/>
            <person name="Sadaie Y."/>
            <person name="Ogasawara N."/>
        </authorList>
    </citation>
    <scope>NUCLEOTIDE SEQUENCE [GENOMIC DNA]</scope>
    <source>
        <strain>168</strain>
    </source>
</reference>
<reference key="2">
    <citation type="journal article" date="1997" name="Nature">
        <title>The complete genome sequence of the Gram-positive bacterium Bacillus subtilis.</title>
        <authorList>
            <person name="Kunst F."/>
            <person name="Ogasawara N."/>
            <person name="Moszer I."/>
            <person name="Albertini A.M."/>
            <person name="Alloni G."/>
            <person name="Azevedo V."/>
            <person name="Bertero M.G."/>
            <person name="Bessieres P."/>
            <person name="Bolotin A."/>
            <person name="Borchert S."/>
            <person name="Borriss R."/>
            <person name="Boursier L."/>
            <person name="Brans A."/>
            <person name="Braun M."/>
            <person name="Brignell S.C."/>
            <person name="Bron S."/>
            <person name="Brouillet S."/>
            <person name="Bruschi C.V."/>
            <person name="Caldwell B."/>
            <person name="Capuano V."/>
            <person name="Carter N.M."/>
            <person name="Choi S.-K."/>
            <person name="Codani J.-J."/>
            <person name="Connerton I.F."/>
            <person name="Cummings N.J."/>
            <person name="Daniel R.A."/>
            <person name="Denizot F."/>
            <person name="Devine K.M."/>
            <person name="Duesterhoeft A."/>
            <person name="Ehrlich S.D."/>
            <person name="Emmerson P.T."/>
            <person name="Entian K.-D."/>
            <person name="Errington J."/>
            <person name="Fabret C."/>
            <person name="Ferrari E."/>
            <person name="Foulger D."/>
            <person name="Fritz C."/>
            <person name="Fujita M."/>
            <person name="Fujita Y."/>
            <person name="Fuma S."/>
            <person name="Galizzi A."/>
            <person name="Galleron N."/>
            <person name="Ghim S.-Y."/>
            <person name="Glaser P."/>
            <person name="Goffeau A."/>
            <person name="Golightly E.J."/>
            <person name="Grandi G."/>
            <person name="Guiseppi G."/>
            <person name="Guy B.J."/>
            <person name="Haga K."/>
            <person name="Haiech J."/>
            <person name="Harwood C.R."/>
            <person name="Henaut A."/>
            <person name="Hilbert H."/>
            <person name="Holsappel S."/>
            <person name="Hosono S."/>
            <person name="Hullo M.-F."/>
            <person name="Itaya M."/>
            <person name="Jones L.-M."/>
            <person name="Joris B."/>
            <person name="Karamata D."/>
            <person name="Kasahara Y."/>
            <person name="Klaerr-Blanchard M."/>
            <person name="Klein C."/>
            <person name="Kobayashi Y."/>
            <person name="Koetter P."/>
            <person name="Koningstein G."/>
            <person name="Krogh S."/>
            <person name="Kumano M."/>
            <person name="Kurita K."/>
            <person name="Lapidus A."/>
            <person name="Lardinois S."/>
            <person name="Lauber J."/>
            <person name="Lazarevic V."/>
            <person name="Lee S.-M."/>
            <person name="Levine A."/>
            <person name="Liu H."/>
            <person name="Masuda S."/>
            <person name="Mauel C."/>
            <person name="Medigue C."/>
            <person name="Medina N."/>
            <person name="Mellado R.P."/>
            <person name="Mizuno M."/>
            <person name="Moestl D."/>
            <person name="Nakai S."/>
            <person name="Noback M."/>
            <person name="Noone D."/>
            <person name="O'Reilly M."/>
            <person name="Ogawa K."/>
            <person name="Ogiwara A."/>
            <person name="Oudega B."/>
            <person name="Park S.-H."/>
            <person name="Parro V."/>
            <person name="Pohl T.M."/>
            <person name="Portetelle D."/>
            <person name="Porwollik S."/>
            <person name="Prescott A.M."/>
            <person name="Presecan E."/>
            <person name="Pujic P."/>
            <person name="Purnelle B."/>
            <person name="Rapoport G."/>
            <person name="Rey M."/>
            <person name="Reynolds S."/>
            <person name="Rieger M."/>
            <person name="Rivolta C."/>
            <person name="Rocha E."/>
            <person name="Roche B."/>
            <person name="Rose M."/>
            <person name="Sadaie Y."/>
            <person name="Sato T."/>
            <person name="Scanlan E."/>
            <person name="Schleich S."/>
            <person name="Schroeter R."/>
            <person name="Scoffone F."/>
            <person name="Sekiguchi J."/>
            <person name="Sekowska A."/>
            <person name="Seror S.J."/>
            <person name="Serror P."/>
            <person name="Shin B.-S."/>
            <person name="Soldo B."/>
            <person name="Sorokin A."/>
            <person name="Tacconi E."/>
            <person name="Takagi T."/>
            <person name="Takahashi H."/>
            <person name="Takemaru K."/>
            <person name="Takeuchi M."/>
            <person name="Tamakoshi A."/>
            <person name="Tanaka T."/>
            <person name="Terpstra P."/>
            <person name="Tognoni A."/>
            <person name="Tosato V."/>
            <person name="Uchiyama S."/>
            <person name="Vandenbol M."/>
            <person name="Vannier F."/>
            <person name="Vassarotti A."/>
            <person name="Viari A."/>
            <person name="Wambutt R."/>
            <person name="Wedler E."/>
            <person name="Wedler H."/>
            <person name="Weitzenegger T."/>
            <person name="Winters P."/>
            <person name="Wipat A."/>
            <person name="Yamamoto H."/>
            <person name="Yamane K."/>
            <person name="Yasumoto K."/>
            <person name="Yata K."/>
            <person name="Yoshida K."/>
            <person name="Yoshikawa H.-F."/>
            <person name="Zumstein E."/>
            <person name="Yoshikawa H."/>
            <person name="Danchin A."/>
        </authorList>
    </citation>
    <scope>NUCLEOTIDE SEQUENCE [LARGE SCALE GENOMIC DNA]</scope>
    <source>
        <strain>168</strain>
    </source>
</reference>
<proteinExistence type="inferred from homology"/>
<name>YDBT_BACSU</name>
<protein>
    <recommendedName>
        <fullName>UPF0699 transmembrane protein YdbT</fullName>
    </recommendedName>
</protein>
<comment type="subcellular location">
    <subcellularLocation>
        <location evidence="2">Cell membrane</location>
        <topology evidence="2">Multi-pass membrane protein</topology>
    </subcellularLocation>
</comment>
<comment type="similarity">
    <text evidence="2">Belongs to the UPF0699 family.</text>
</comment>
<organism>
    <name type="scientific">Bacillus subtilis (strain 168)</name>
    <dbReference type="NCBI Taxonomy" id="224308"/>
    <lineage>
        <taxon>Bacteria</taxon>
        <taxon>Bacillati</taxon>
        <taxon>Bacillota</taxon>
        <taxon>Bacilli</taxon>
        <taxon>Bacillales</taxon>
        <taxon>Bacillaceae</taxon>
        <taxon>Bacillus</taxon>
    </lineage>
</organism>
<feature type="chain" id="PRO_0000359976" description="UPF0699 transmembrane protein YdbT">
    <location>
        <begin position="1"/>
        <end position="493"/>
    </location>
</feature>
<feature type="transmembrane region" description="Helical" evidence="1">
    <location>
        <begin position="18"/>
        <end position="38"/>
    </location>
</feature>
<feature type="transmembrane region" description="Helical" evidence="1">
    <location>
        <begin position="46"/>
        <end position="66"/>
    </location>
</feature>
<feature type="transmembrane region" description="Helical" evidence="1">
    <location>
        <begin position="188"/>
        <end position="208"/>
    </location>
</feature>
<feature type="transmembrane region" description="Helical" evidence="1">
    <location>
        <begin position="232"/>
        <end position="252"/>
    </location>
</feature>
<feature type="transmembrane region" description="Helical" evidence="1">
    <location>
        <begin position="370"/>
        <end position="390"/>
    </location>
</feature>
<feature type="transmembrane region" description="Helical" evidence="1">
    <location>
        <begin position="393"/>
        <end position="413"/>
    </location>
</feature>